<comment type="similarity">
    <text evidence="1">Belongs to the bacterial ribosomal protein bL34 family.</text>
</comment>
<reference key="1">
    <citation type="submission" date="2008-08" db="EMBL/GenBank/DDBJ databases">
        <title>Complete sequence of Vibrio fischeri strain MJ11.</title>
        <authorList>
            <person name="Mandel M.J."/>
            <person name="Stabb E.V."/>
            <person name="Ruby E.G."/>
            <person name="Ferriera S."/>
            <person name="Johnson J."/>
            <person name="Kravitz S."/>
            <person name="Beeson K."/>
            <person name="Sutton G."/>
            <person name="Rogers Y.-H."/>
            <person name="Friedman R."/>
            <person name="Frazier M."/>
            <person name="Venter J.C."/>
        </authorList>
    </citation>
    <scope>NUCLEOTIDE SEQUENCE [LARGE SCALE GENOMIC DNA]</scope>
    <source>
        <strain>MJ11</strain>
    </source>
</reference>
<dbReference type="EMBL" id="CP001139">
    <property type="protein sequence ID" value="ACH64971.1"/>
    <property type="molecule type" value="Genomic_DNA"/>
</dbReference>
<dbReference type="RefSeq" id="WP_005416778.1">
    <property type="nucleotide sequence ID" value="NC_011184.1"/>
</dbReference>
<dbReference type="SMR" id="B5FEU9"/>
<dbReference type="GeneID" id="56275595"/>
<dbReference type="KEGG" id="vfm:VFMJ11_0005"/>
<dbReference type="HOGENOM" id="CLU_129938_2_0_6"/>
<dbReference type="Proteomes" id="UP000001857">
    <property type="component" value="Chromosome I"/>
</dbReference>
<dbReference type="GO" id="GO:1990904">
    <property type="term" value="C:ribonucleoprotein complex"/>
    <property type="evidence" value="ECO:0007669"/>
    <property type="project" value="UniProtKB-KW"/>
</dbReference>
<dbReference type="GO" id="GO:0005840">
    <property type="term" value="C:ribosome"/>
    <property type="evidence" value="ECO:0007669"/>
    <property type="project" value="UniProtKB-KW"/>
</dbReference>
<dbReference type="GO" id="GO:0003735">
    <property type="term" value="F:structural constituent of ribosome"/>
    <property type="evidence" value="ECO:0007669"/>
    <property type="project" value="InterPro"/>
</dbReference>
<dbReference type="GO" id="GO:0006412">
    <property type="term" value="P:translation"/>
    <property type="evidence" value="ECO:0007669"/>
    <property type="project" value="UniProtKB-UniRule"/>
</dbReference>
<dbReference type="FunFam" id="1.10.287.3980:FF:000001">
    <property type="entry name" value="Mitochondrial ribosomal protein L34"/>
    <property type="match status" value="1"/>
</dbReference>
<dbReference type="Gene3D" id="1.10.287.3980">
    <property type="match status" value="1"/>
</dbReference>
<dbReference type="HAMAP" id="MF_00391">
    <property type="entry name" value="Ribosomal_bL34"/>
    <property type="match status" value="1"/>
</dbReference>
<dbReference type="InterPro" id="IPR000271">
    <property type="entry name" value="Ribosomal_bL34"/>
</dbReference>
<dbReference type="InterPro" id="IPR020939">
    <property type="entry name" value="Ribosomal_bL34_CS"/>
</dbReference>
<dbReference type="NCBIfam" id="TIGR01030">
    <property type="entry name" value="rpmH_bact"/>
    <property type="match status" value="1"/>
</dbReference>
<dbReference type="PANTHER" id="PTHR14503:SF4">
    <property type="entry name" value="LARGE RIBOSOMAL SUBUNIT PROTEIN BL34M"/>
    <property type="match status" value="1"/>
</dbReference>
<dbReference type="PANTHER" id="PTHR14503">
    <property type="entry name" value="MITOCHONDRIAL RIBOSOMAL PROTEIN 34 FAMILY MEMBER"/>
    <property type="match status" value="1"/>
</dbReference>
<dbReference type="Pfam" id="PF00468">
    <property type="entry name" value="Ribosomal_L34"/>
    <property type="match status" value="1"/>
</dbReference>
<dbReference type="PROSITE" id="PS00784">
    <property type="entry name" value="RIBOSOMAL_L34"/>
    <property type="match status" value="1"/>
</dbReference>
<evidence type="ECO:0000255" key="1">
    <source>
        <dbReference type="HAMAP-Rule" id="MF_00391"/>
    </source>
</evidence>
<evidence type="ECO:0000305" key="2"/>
<sequence length="44" mass="5195">MKRTFQPSVLKRKRSHGFRARMATKNGRNVINARRAKGRKRLSK</sequence>
<accession>B5FEU9</accession>
<name>RL34_ALIFM</name>
<proteinExistence type="inferred from homology"/>
<keyword id="KW-0687">Ribonucleoprotein</keyword>
<keyword id="KW-0689">Ribosomal protein</keyword>
<protein>
    <recommendedName>
        <fullName evidence="1">Large ribosomal subunit protein bL34</fullName>
    </recommendedName>
    <alternativeName>
        <fullName evidence="2">50S ribosomal protein L34</fullName>
    </alternativeName>
</protein>
<feature type="chain" id="PRO_1000196139" description="Large ribosomal subunit protein bL34">
    <location>
        <begin position="1"/>
        <end position="44"/>
    </location>
</feature>
<gene>
    <name evidence="1" type="primary">rpmH</name>
    <name type="ordered locus">VFMJ11_0005</name>
</gene>
<organism>
    <name type="scientific">Aliivibrio fischeri (strain MJ11)</name>
    <name type="common">Vibrio fischeri</name>
    <dbReference type="NCBI Taxonomy" id="388396"/>
    <lineage>
        <taxon>Bacteria</taxon>
        <taxon>Pseudomonadati</taxon>
        <taxon>Pseudomonadota</taxon>
        <taxon>Gammaproteobacteria</taxon>
        <taxon>Vibrionales</taxon>
        <taxon>Vibrionaceae</taxon>
        <taxon>Aliivibrio</taxon>
    </lineage>
</organism>